<accession>Q4ZL75</accession>
<sequence>MKRTPHLLAIQSHVVFGHAGNSAAVFPMQRIGVNVWPLNTVQFSNHTQYKQWTGEVLAPQQIPALIDGIAAIGELGNCDAVLSGYLGSAAQGRAILTGVARIKAANPKALYLCDPVMGHPEKGCIVAPEVSDFLLQEAAAMADFMCPNQLELDSFSGRKPESLHDCLAMARALLARGPRAIVVKHLDYPGKAADGFEMLLVTAEASWHLRRPLLAFPRQPVGVGDLTSGLFLSRVLLGDDLVAAFEFAAAAVHEVLLETQACGSYELELVRAQDRIAHPRVKFEAVRL</sequence>
<feature type="chain" id="PRO_0000269823" description="Pyridoxal kinase PdxY">
    <location>
        <begin position="1"/>
        <end position="288"/>
    </location>
</feature>
<feature type="binding site" evidence="1">
    <location>
        <position position="12"/>
    </location>
    <ligand>
        <name>substrate</name>
    </ligand>
</feature>
<feature type="binding site" evidence="1">
    <location>
        <begin position="47"/>
        <end position="48"/>
    </location>
    <ligand>
        <name>substrate</name>
    </ligand>
</feature>
<feature type="binding site" evidence="1">
    <location>
        <position position="114"/>
    </location>
    <ligand>
        <name>ATP</name>
        <dbReference type="ChEBI" id="CHEBI:30616"/>
    </ligand>
</feature>
<feature type="binding site" evidence="1">
    <location>
        <position position="151"/>
    </location>
    <ligand>
        <name>ATP</name>
        <dbReference type="ChEBI" id="CHEBI:30616"/>
    </ligand>
</feature>
<feature type="binding site" evidence="1">
    <location>
        <position position="184"/>
    </location>
    <ligand>
        <name>ATP</name>
        <dbReference type="ChEBI" id="CHEBI:30616"/>
    </ligand>
</feature>
<feature type="binding site" evidence="1">
    <location>
        <begin position="211"/>
        <end position="214"/>
    </location>
    <ligand>
        <name>ATP</name>
        <dbReference type="ChEBI" id="CHEBI:30616"/>
    </ligand>
</feature>
<feature type="binding site" evidence="1">
    <location>
        <position position="225"/>
    </location>
    <ligand>
        <name>substrate</name>
    </ligand>
</feature>
<keyword id="KW-0067">ATP-binding</keyword>
<keyword id="KW-0418">Kinase</keyword>
<keyword id="KW-0460">Magnesium</keyword>
<keyword id="KW-0547">Nucleotide-binding</keyword>
<keyword id="KW-0808">Transferase</keyword>
<dbReference type="EC" id="2.7.1.35" evidence="1"/>
<dbReference type="EMBL" id="CP000075">
    <property type="protein sequence ID" value="AAY40097.1"/>
    <property type="molecule type" value="Genomic_DNA"/>
</dbReference>
<dbReference type="RefSeq" id="WP_011269407.1">
    <property type="nucleotide sequence ID" value="NC_007005.1"/>
</dbReference>
<dbReference type="RefSeq" id="YP_238135.1">
    <property type="nucleotide sequence ID" value="NC_007005.1"/>
</dbReference>
<dbReference type="SMR" id="Q4ZL75"/>
<dbReference type="STRING" id="205918.Psyr_5070"/>
<dbReference type="KEGG" id="psb:Psyr_5070"/>
<dbReference type="PATRIC" id="fig|205918.7.peg.5230"/>
<dbReference type="eggNOG" id="COG2240">
    <property type="taxonomic scope" value="Bacteria"/>
</dbReference>
<dbReference type="HOGENOM" id="CLU_046496_3_0_6"/>
<dbReference type="OrthoDB" id="9800808at2"/>
<dbReference type="UniPathway" id="UPA01068">
    <property type="reaction ID" value="UER00298"/>
</dbReference>
<dbReference type="Proteomes" id="UP000000426">
    <property type="component" value="Chromosome"/>
</dbReference>
<dbReference type="GO" id="GO:0005829">
    <property type="term" value="C:cytosol"/>
    <property type="evidence" value="ECO:0007669"/>
    <property type="project" value="TreeGrafter"/>
</dbReference>
<dbReference type="GO" id="GO:0005524">
    <property type="term" value="F:ATP binding"/>
    <property type="evidence" value="ECO:0007669"/>
    <property type="project" value="UniProtKB-UniRule"/>
</dbReference>
<dbReference type="GO" id="GO:0000287">
    <property type="term" value="F:magnesium ion binding"/>
    <property type="evidence" value="ECO:0007669"/>
    <property type="project" value="UniProtKB-UniRule"/>
</dbReference>
<dbReference type="GO" id="GO:0008478">
    <property type="term" value="F:pyridoxal kinase activity"/>
    <property type="evidence" value="ECO:0007669"/>
    <property type="project" value="UniProtKB-UniRule"/>
</dbReference>
<dbReference type="GO" id="GO:0009443">
    <property type="term" value="P:pyridoxal 5'-phosphate salvage"/>
    <property type="evidence" value="ECO:0007669"/>
    <property type="project" value="UniProtKB-UniRule"/>
</dbReference>
<dbReference type="CDD" id="cd01173">
    <property type="entry name" value="pyridoxal_pyridoxamine_kinase"/>
    <property type="match status" value="1"/>
</dbReference>
<dbReference type="FunFam" id="3.40.1190.20:FF:000008">
    <property type="entry name" value="Pyridoxal kinase PdxY"/>
    <property type="match status" value="1"/>
</dbReference>
<dbReference type="Gene3D" id="3.40.1190.20">
    <property type="match status" value="1"/>
</dbReference>
<dbReference type="HAMAP" id="MF_01639">
    <property type="entry name" value="PdxY"/>
    <property type="match status" value="1"/>
</dbReference>
<dbReference type="InterPro" id="IPR013749">
    <property type="entry name" value="PM/HMP-P_kinase-1"/>
</dbReference>
<dbReference type="InterPro" id="IPR004625">
    <property type="entry name" value="PyrdxlKinase"/>
</dbReference>
<dbReference type="InterPro" id="IPR023685">
    <property type="entry name" value="Pyridoxal_kinase_PdxY"/>
</dbReference>
<dbReference type="InterPro" id="IPR029056">
    <property type="entry name" value="Ribokinase-like"/>
</dbReference>
<dbReference type="NCBIfam" id="NF004398">
    <property type="entry name" value="PRK05756.1"/>
    <property type="match status" value="1"/>
</dbReference>
<dbReference type="NCBIfam" id="TIGR00687">
    <property type="entry name" value="pyridox_kin"/>
    <property type="match status" value="1"/>
</dbReference>
<dbReference type="PANTHER" id="PTHR10534">
    <property type="entry name" value="PYRIDOXAL KINASE"/>
    <property type="match status" value="1"/>
</dbReference>
<dbReference type="PANTHER" id="PTHR10534:SF2">
    <property type="entry name" value="PYRIDOXAL KINASE"/>
    <property type="match status" value="1"/>
</dbReference>
<dbReference type="Pfam" id="PF08543">
    <property type="entry name" value="Phos_pyr_kin"/>
    <property type="match status" value="1"/>
</dbReference>
<dbReference type="SUPFAM" id="SSF53613">
    <property type="entry name" value="Ribokinase-like"/>
    <property type="match status" value="1"/>
</dbReference>
<proteinExistence type="inferred from homology"/>
<comment type="function">
    <text evidence="1">Pyridoxal kinase involved in the salvage pathway of pyridoxal 5'-phosphate (PLP). Catalyzes the phosphorylation of pyridoxal to PLP.</text>
</comment>
<comment type="catalytic activity">
    <reaction evidence="1">
        <text>pyridoxal + ATP = pyridoxal 5'-phosphate + ADP + H(+)</text>
        <dbReference type="Rhea" id="RHEA:10224"/>
        <dbReference type="ChEBI" id="CHEBI:15378"/>
        <dbReference type="ChEBI" id="CHEBI:17310"/>
        <dbReference type="ChEBI" id="CHEBI:30616"/>
        <dbReference type="ChEBI" id="CHEBI:456216"/>
        <dbReference type="ChEBI" id="CHEBI:597326"/>
        <dbReference type="EC" id="2.7.1.35"/>
    </reaction>
</comment>
<comment type="cofactor">
    <cofactor evidence="1">
        <name>Mg(2+)</name>
        <dbReference type="ChEBI" id="CHEBI:18420"/>
    </cofactor>
</comment>
<comment type="pathway">
    <text evidence="1">Cofactor metabolism; pyridoxal 5'-phosphate salvage; pyridoxal 5'-phosphate from pyridoxal: step 1/1.</text>
</comment>
<comment type="subunit">
    <text evidence="1">Homodimer.</text>
</comment>
<comment type="similarity">
    <text evidence="1">Belongs to the pyridoxine kinase family. PdxY subfamily.</text>
</comment>
<gene>
    <name evidence="1" type="primary">pdxY</name>
    <name type="ordered locus">Psyr_5070</name>
</gene>
<reference key="1">
    <citation type="journal article" date="2005" name="Proc. Natl. Acad. Sci. U.S.A.">
        <title>Comparison of the complete genome sequences of Pseudomonas syringae pv. syringae B728a and pv. tomato DC3000.</title>
        <authorList>
            <person name="Feil H."/>
            <person name="Feil W.S."/>
            <person name="Chain P."/>
            <person name="Larimer F."/>
            <person name="Dibartolo G."/>
            <person name="Copeland A."/>
            <person name="Lykidis A."/>
            <person name="Trong S."/>
            <person name="Nolan M."/>
            <person name="Goltsman E."/>
            <person name="Thiel J."/>
            <person name="Malfatti S."/>
            <person name="Loper J.E."/>
            <person name="Lapidus A."/>
            <person name="Detter J.C."/>
            <person name="Land M."/>
            <person name="Richardson P.M."/>
            <person name="Kyrpides N.C."/>
            <person name="Ivanova N."/>
            <person name="Lindow S.E."/>
        </authorList>
    </citation>
    <scope>NUCLEOTIDE SEQUENCE [LARGE SCALE GENOMIC DNA]</scope>
    <source>
        <strain>B728a</strain>
    </source>
</reference>
<name>PDXY_PSEU2</name>
<evidence type="ECO:0000255" key="1">
    <source>
        <dbReference type="HAMAP-Rule" id="MF_01639"/>
    </source>
</evidence>
<organism>
    <name type="scientific">Pseudomonas syringae pv. syringae (strain B728a)</name>
    <dbReference type="NCBI Taxonomy" id="205918"/>
    <lineage>
        <taxon>Bacteria</taxon>
        <taxon>Pseudomonadati</taxon>
        <taxon>Pseudomonadota</taxon>
        <taxon>Gammaproteobacteria</taxon>
        <taxon>Pseudomonadales</taxon>
        <taxon>Pseudomonadaceae</taxon>
        <taxon>Pseudomonas</taxon>
        <taxon>Pseudomonas syringae</taxon>
    </lineage>
</organism>
<protein>
    <recommendedName>
        <fullName evidence="1">Pyridoxal kinase PdxY</fullName>
        <shortName evidence="1">PL kinase</shortName>
        <ecNumber evidence="1">2.7.1.35</ecNumber>
    </recommendedName>
</protein>